<evidence type="ECO:0000250" key="1">
    <source>
        <dbReference type="UniProtKB" id="P0ADA1"/>
    </source>
</evidence>
<evidence type="ECO:0000255" key="2"/>
<evidence type="ECO:0000269" key="3">
    <source>
    </source>
</evidence>
<evidence type="ECO:0000305" key="4"/>
<evidence type="ECO:0000312" key="5">
    <source>
        <dbReference type="Araport" id="AT3G26430"/>
    </source>
</evidence>
<evidence type="ECO:0000312" key="6">
    <source>
        <dbReference type="EMBL" id="BAB02204.1"/>
    </source>
</evidence>
<reference key="1">
    <citation type="journal article" date="2000" name="DNA Res.">
        <title>Structural analysis of Arabidopsis thaliana chromosome 3. II. Sequence features of the 4,251,695 bp regions covered by 90 P1, TAC and BAC clones.</title>
        <authorList>
            <person name="Kaneko T."/>
            <person name="Katoh T."/>
            <person name="Sato S."/>
            <person name="Nakamura Y."/>
            <person name="Asamizu E."/>
            <person name="Tabata S."/>
        </authorList>
    </citation>
    <scope>NUCLEOTIDE SEQUENCE [LARGE SCALE GENOMIC DNA]</scope>
    <source>
        <strain>cv. Columbia</strain>
    </source>
</reference>
<reference key="2">
    <citation type="journal article" date="2017" name="Plant J.">
        <title>Araport11: a complete reannotation of the Arabidopsis thaliana reference genome.</title>
        <authorList>
            <person name="Cheng C.Y."/>
            <person name="Krishnakumar V."/>
            <person name="Chan A.P."/>
            <person name="Thibaud-Nissen F."/>
            <person name="Schobel S."/>
            <person name="Town C.D."/>
        </authorList>
    </citation>
    <scope>GENOME REANNOTATION</scope>
    <source>
        <strain>cv. Columbia</strain>
    </source>
</reference>
<reference key="3">
    <citation type="journal article" date="2003" name="Science">
        <title>Empirical analysis of transcriptional activity in the Arabidopsis genome.</title>
        <authorList>
            <person name="Yamada K."/>
            <person name="Lim J."/>
            <person name="Dale J.M."/>
            <person name="Chen H."/>
            <person name="Shinn P."/>
            <person name="Palm C.J."/>
            <person name="Southwick A.M."/>
            <person name="Wu H.C."/>
            <person name="Kim C.J."/>
            <person name="Nguyen M."/>
            <person name="Pham P.K."/>
            <person name="Cheuk R.F."/>
            <person name="Karlin-Newmann G."/>
            <person name="Liu S.X."/>
            <person name="Lam B."/>
            <person name="Sakano H."/>
            <person name="Wu T."/>
            <person name="Yu G."/>
            <person name="Miranda M."/>
            <person name="Quach H.L."/>
            <person name="Tripp M."/>
            <person name="Chang C.H."/>
            <person name="Lee J.M."/>
            <person name="Toriumi M.J."/>
            <person name="Chan M.M."/>
            <person name="Tang C.C."/>
            <person name="Onodera C.S."/>
            <person name="Deng J.M."/>
            <person name="Akiyama K."/>
            <person name="Ansari Y."/>
            <person name="Arakawa T."/>
            <person name="Banh J."/>
            <person name="Banno F."/>
            <person name="Bowser L."/>
            <person name="Brooks S.Y."/>
            <person name="Carninci P."/>
            <person name="Chao Q."/>
            <person name="Choy N."/>
            <person name="Enju A."/>
            <person name="Goldsmith A.D."/>
            <person name="Gurjal M."/>
            <person name="Hansen N.F."/>
            <person name="Hayashizaki Y."/>
            <person name="Johnson-Hopson C."/>
            <person name="Hsuan V.W."/>
            <person name="Iida K."/>
            <person name="Karnes M."/>
            <person name="Khan S."/>
            <person name="Koesema E."/>
            <person name="Ishida J."/>
            <person name="Jiang P.X."/>
            <person name="Jones T."/>
            <person name="Kawai J."/>
            <person name="Kamiya A."/>
            <person name="Meyers C."/>
            <person name="Nakajima M."/>
            <person name="Narusaka M."/>
            <person name="Seki M."/>
            <person name="Sakurai T."/>
            <person name="Satou M."/>
            <person name="Tamse R."/>
            <person name="Vaysberg M."/>
            <person name="Wallender E.K."/>
            <person name="Wong C."/>
            <person name="Yamamura Y."/>
            <person name="Yuan S."/>
            <person name="Shinozaki K."/>
            <person name="Davis R.W."/>
            <person name="Theologis A."/>
            <person name="Ecker J.R."/>
        </authorList>
    </citation>
    <scope>NUCLEOTIDE SEQUENCE [LARGE SCALE MRNA]</scope>
    <source>
        <strain>cv. Columbia</strain>
    </source>
</reference>
<reference key="4">
    <citation type="journal article" date="2004" name="Prog. Lipid Res.">
        <title>GDSL family of serine esterases/lipases.</title>
        <authorList>
            <person name="Akoh C.C."/>
            <person name="Lee G.-C."/>
            <person name="Liaw Y.-C."/>
            <person name="Huang T.-H."/>
            <person name="Shaw J.-F."/>
        </authorList>
    </citation>
    <scope>REVIEW</scope>
</reference>
<reference key="5">
    <citation type="journal article" date="2008" name="Pak. J. Biol. Sci.">
        <title>Sequence analysis of GDSL lipase gene family in Arabidopsis thaliana.</title>
        <authorList>
            <person name="Ling H."/>
        </authorList>
    </citation>
    <scope>GENE FAMILY</scope>
</reference>
<reference key="6">
    <citation type="journal article" date="2013" name="Plant Mol. Biol.">
        <title>The Arabidopsis thaliana ortholog of a purported maize cholinesterase gene encodes a GDSL-lipase.</title>
        <authorList>
            <person name="Muralidharan M."/>
            <person name="Buss K."/>
            <person name="Larrimore K.E."/>
            <person name="Segerson N.A."/>
            <person name="Kannan L."/>
            <person name="Mor T.S."/>
        </authorList>
    </citation>
    <scope>FUNCTION</scope>
    <scope>CATALYTIC ACTIVITY</scope>
    <scope>BIOPHYSICOCHEMICAL PROPERTIES</scope>
    <scope>ACTIVITY REGULATION</scope>
</reference>
<gene>
    <name evidence="5" type="ordered locus">At3g26430</name>
    <name evidence="6" type="ORF">F20C19.19</name>
</gene>
<proteinExistence type="evidence at protein level"/>
<comment type="function">
    <text evidence="3">Lipase that can hydrolyze p-nitrophenyl butyrate and p-nitrophenyl palmitate in vitro (PubMed:23430565). Possesses low activity against p-nitrophenyl acetate (PubMed:23430565). Substrate preference is p-nitrophenyl palmitate &gt; p-nitrophenyl butyrate &gt;&gt; p-nitrophenyl acetate (PubMed:23430565). Lacks cholinesterase activity (PubMed:23430565).</text>
</comment>
<comment type="catalytic activity">
    <reaction evidence="3">
        <text>hexadecanoate ester + H2O = an aliphatic alcohol + hexadecanoate + H(+)</text>
        <dbReference type="Rhea" id="RHEA:47392"/>
        <dbReference type="ChEBI" id="CHEBI:2571"/>
        <dbReference type="ChEBI" id="CHEBI:7896"/>
        <dbReference type="ChEBI" id="CHEBI:15377"/>
        <dbReference type="ChEBI" id="CHEBI:15378"/>
        <dbReference type="ChEBI" id="CHEBI:25835"/>
    </reaction>
    <physiologicalReaction direction="left-to-right" evidence="3">
        <dbReference type="Rhea" id="RHEA:47393"/>
    </physiologicalReaction>
</comment>
<comment type="catalytic activity">
    <reaction evidence="3">
        <text>a butanoate ester + H2O = an aliphatic alcohol + butanoate + H(+)</text>
        <dbReference type="Rhea" id="RHEA:47348"/>
        <dbReference type="ChEBI" id="CHEBI:2571"/>
        <dbReference type="ChEBI" id="CHEBI:15377"/>
        <dbReference type="ChEBI" id="CHEBI:15378"/>
        <dbReference type="ChEBI" id="CHEBI:17968"/>
        <dbReference type="ChEBI" id="CHEBI:50477"/>
    </reaction>
    <physiologicalReaction direction="left-to-right" evidence="3">
        <dbReference type="Rhea" id="RHEA:47349"/>
    </physiologicalReaction>
</comment>
<comment type="activity regulation">
    <text evidence="3">Lipase activity is inhibited by phenylmethylsulfonyl fluoride (PMSF), but not neostigmine bromide (NB).</text>
</comment>
<comment type="biophysicochemical properties">
    <kinetics>
        <KM evidence="3">4.6 mM for p-nitrophenyl acetate</KM>
        <KM evidence="3">2 mM for p-nitrophenyl butyrate</KM>
        <KM evidence="3">1.2 mM for p-nitrophenyl palmitate</KM>
    </kinetics>
</comment>
<comment type="subcellular location">
    <subcellularLocation>
        <location evidence="4">Secreted</location>
    </subcellularLocation>
</comment>
<comment type="similarity">
    <text evidence="4">Belongs to the 'GDSL' lipolytic enzyme family.</text>
</comment>
<name>GDL53_ARATH</name>
<accession>Q9LIN2</accession>
<sequence>METNLLLVKCVLLASCLIHPRACSPSCNFPAIFNFGDSNSDTGGLSASFGQAPYPNGQTFFHSPSGRFSDGRLIIDFIAEELGLPYLNAFLDSIGSNFSHGANFATAGSTVRPPNATIAQSGVSPISLDVQLVQFSDFITRSQLIRNRGGVFKKLLPKKEYFSQALYTFDIGQNDLTAGLKLNMTSDQIKAYIPDVHDQLSNVIRKVYSKGGRRFWIHNTAPLGCLPYVLDRFPVPASQIDNHGCAIPRNEIARYYNSELKRRVIELRKELSEAAFTYVDIYSIKLTLITQAKKLGFRYPLVACCGHGGKYNFNKLIKCGAKVMIKGKEIVLAKSCNDVSFRVSWDGIHFTETTNSWIFQQINDGAFSDPPLPVKSACTR</sequence>
<dbReference type="EC" id="3.1.1.-" evidence="3"/>
<dbReference type="EMBL" id="AP001298">
    <property type="protein sequence ID" value="BAB02204.1"/>
    <property type="molecule type" value="Genomic_DNA"/>
</dbReference>
<dbReference type="EMBL" id="CP002686">
    <property type="protein sequence ID" value="AEE77155.1"/>
    <property type="molecule type" value="Genomic_DNA"/>
</dbReference>
<dbReference type="EMBL" id="AY062535">
    <property type="protein sequence ID" value="AAL32613.1"/>
    <property type="molecule type" value="mRNA"/>
</dbReference>
<dbReference type="EMBL" id="AY093315">
    <property type="protein sequence ID" value="AAM13314.1"/>
    <property type="molecule type" value="mRNA"/>
</dbReference>
<dbReference type="RefSeq" id="NP_189274.1">
    <property type="nucleotide sequence ID" value="NM_113550.3"/>
</dbReference>
<dbReference type="SMR" id="Q9LIN2"/>
<dbReference type="FunCoup" id="Q9LIN2">
    <property type="interactions" value="106"/>
</dbReference>
<dbReference type="STRING" id="3702.Q9LIN2"/>
<dbReference type="SwissLipids" id="SLP:000001881"/>
<dbReference type="GlyGen" id="Q9LIN2">
    <property type="glycosylation" value="3 sites"/>
</dbReference>
<dbReference type="PaxDb" id="3702-AT3G26430.1"/>
<dbReference type="ProteomicsDB" id="247098"/>
<dbReference type="EnsemblPlants" id="AT3G26430.1">
    <property type="protein sequence ID" value="AT3G26430.1"/>
    <property type="gene ID" value="AT3G26430"/>
</dbReference>
<dbReference type="GeneID" id="822247"/>
<dbReference type="Gramene" id="AT3G26430.1">
    <property type="protein sequence ID" value="AT3G26430.1"/>
    <property type="gene ID" value="AT3G26430"/>
</dbReference>
<dbReference type="KEGG" id="ath:AT3G26430"/>
<dbReference type="Araport" id="AT3G26430"/>
<dbReference type="TAIR" id="AT3G26430"/>
<dbReference type="eggNOG" id="ENOG502QQGV">
    <property type="taxonomic scope" value="Eukaryota"/>
</dbReference>
<dbReference type="HOGENOM" id="CLU_015101_2_0_1"/>
<dbReference type="InParanoid" id="Q9LIN2"/>
<dbReference type="OMA" id="IDNHGCA"/>
<dbReference type="PhylomeDB" id="Q9LIN2"/>
<dbReference type="BioCyc" id="ARA:AT3G26430-MONOMER"/>
<dbReference type="PRO" id="PR:Q9LIN2"/>
<dbReference type="Proteomes" id="UP000006548">
    <property type="component" value="Chromosome 3"/>
</dbReference>
<dbReference type="ExpressionAtlas" id="Q9LIN2">
    <property type="expression patterns" value="baseline and differential"/>
</dbReference>
<dbReference type="GO" id="GO:0005576">
    <property type="term" value="C:extracellular region"/>
    <property type="evidence" value="ECO:0007669"/>
    <property type="project" value="UniProtKB-SubCell"/>
</dbReference>
<dbReference type="GO" id="GO:0016298">
    <property type="term" value="F:lipase activity"/>
    <property type="evidence" value="ECO:0000314"/>
    <property type="project" value="TAIR"/>
</dbReference>
<dbReference type="GO" id="GO:0016042">
    <property type="term" value="P:lipid catabolic process"/>
    <property type="evidence" value="ECO:0007669"/>
    <property type="project" value="UniProtKB-KW"/>
</dbReference>
<dbReference type="CDD" id="cd01837">
    <property type="entry name" value="SGNH_plant_lipase_like"/>
    <property type="match status" value="1"/>
</dbReference>
<dbReference type="FunFam" id="3.40.50.1110:FF:000009">
    <property type="entry name" value="GDSL esterase/lipase At1g09390"/>
    <property type="match status" value="1"/>
</dbReference>
<dbReference type="Gene3D" id="3.40.50.1110">
    <property type="entry name" value="SGNH hydrolase"/>
    <property type="match status" value="1"/>
</dbReference>
<dbReference type="InterPro" id="IPR001087">
    <property type="entry name" value="GDSL"/>
</dbReference>
<dbReference type="InterPro" id="IPR036514">
    <property type="entry name" value="SGNH_hydro_sf"/>
</dbReference>
<dbReference type="InterPro" id="IPR035669">
    <property type="entry name" value="SGNH_plant_lipase-like"/>
</dbReference>
<dbReference type="PANTHER" id="PTHR22835:SF117">
    <property type="entry name" value="GDSL-LIKE LIPASE_ACYLHYDROLASE"/>
    <property type="match status" value="1"/>
</dbReference>
<dbReference type="PANTHER" id="PTHR22835">
    <property type="entry name" value="ZINC FINGER FYVE DOMAIN CONTAINING PROTEIN"/>
    <property type="match status" value="1"/>
</dbReference>
<dbReference type="Pfam" id="PF00657">
    <property type="entry name" value="Lipase_GDSL"/>
    <property type="match status" value="1"/>
</dbReference>
<feature type="signal peptide" evidence="2">
    <location>
        <begin position="1"/>
        <end position="25"/>
    </location>
</feature>
<feature type="chain" id="PRO_0000367394" description="GDSL esterase/lipase At3g26430">
    <location>
        <begin position="26"/>
        <end position="380"/>
    </location>
</feature>
<feature type="active site" description="Nucleophile" evidence="1">
    <location>
        <position position="38"/>
    </location>
</feature>
<feature type="active site" evidence="1">
    <location>
        <position position="346"/>
    </location>
</feature>
<feature type="active site" evidence="1">
    <location>
        <position position="349"/>
    </location>
</feature>
<feature type="glycosylation site" description="N-linked (GlcNAc...) asparagine" evidence="2">
    <location>
        <position position="97"/>
    </location>
</feature>
<feature type="glycosylation site" description="N-linked (GlcNAc...) asparagine" evidence="2">
    <location>
        <position position="115"/>
    </location>
</feature>
<feature type="glycosylation site" description="N-linked (GlcNAc...) asparagine" evidence="2">
    <location>
        <position position="183"/>
    </location>
</feature>
<protein>
    <recommendedName>
        <fullName evidence="4">GDSL esterase/lipase At3g26430</fullName>
        <ecNumber evidence="3">3.1.1.-</ecNumber>
    </recommendedName>
    <alternativeName>
        <fullName evidence="4">Extracellular lipase At3g26430</fullName>
    </alternativeName>
</protein>
<keyword id="KW-0325">Glycoprotein</keyword>
<keyword id="KW-0378">Hydrolase</keyword>
<keyword id="KW-0442">Lipid degradation</keyword>
<keyword id="KW-0443">Lipid metabolism</keyword>
<keyword id="KW-1185">Reference proteome</keyword>
<keyword id="KW-0964">Secreted</keyword>
<keyword id="KW-0732">Signal</keyword>
<organism>
    <name type="scientific">Arabidopsis thaliana</name>
    <name type="common">Mouse-ear cress</name>
    <dbReference type="NCBI Taxonomy" id="3702"/>
    <lineage>
        <taxon>Eukaryota</taxon>
        <taxon>Viridiplantae</taxon>
        <taxon>Streptophyta</taxon>
        <taxon>Embryophyta</taxon>
        <taxon>Tracheophyta</taxon>
        <taxon>Spermatophyta</taxon>
        <taxon>Magnoliopsida</taxon>
        <taxon>eudicotyledons</taxon>
        <taxon>Gunneridae</taxon>
        <taxon>Pentapetalae</taxon>
        <taxon>rosids</taxon>
        <taxon>malvids</taxon>
        <taxon>Brassicales</taxon>
        <taxon>Brassicaceae</taxon>
        <taxon>Camelineae</taxon>
        <taxon>Arabidopsis</taxon>
    </lineage>
</organism>